<proteinExistence type="inferred from homology"/>
<evidence type="ECO:0000255" key="1">
    <source>
        <dbReference type="HAMAP-Rule" id="MF_00145"/>
    </source>
</evidence>
<comment type="catalytic activity">
    <reaction evidence="1">
        <text>(2R)-3-phosphoglycerate + ATP = (2R)-3-phospho-glyceroyl phosphate + ADP</text>
        <dbReference type="Rhea" id="RHEA:14801"/>
        <dbReference type="ChEBI" id="CHEBI:30616"/>
        <dbReference type="ChEBI" id="CHEBI:57604"/>
        <dbReference type="ChEBI" id="CHEBI:58272"/>
        <dbReference type="ChEBI" id="CHEBI:456216"/>
        <dbReference type="EC" id="2.7.2.3"/>
    </reaction>
</comment>
<comment type="pathway">
    <text evidence="1">Carbohydrate degradation; glycolysis; pyruvate from D-glyceraldehyde 3-phosphate: step 2/5.</text>
</comment>
<comment type="subunit">
    <text evidence="1">Monomer.</text>
</comment>
<comment type="subcellular location">
    <subcellularLocation>
        <location evidence="1">Cytoplasm</location>
    </subcellularLocation>
</comment>
<comment type="similarity">
    <text evidence="1">Belongs to the phosphoglycerate kinase family.</text>
</comment>
<dbReference type="EC" id="2.7.2.3" evidence="1"/>
<dbReference type="EMBL" id="AE017220">
    <property type="protein sequence ID" value="AAX66917.1"/>
    <property type="molecule type" value="Genomic_DNA"/>
</dbReference>
<dbReference type="RefSeq" id="WP_000111274.1">
    <property type="nucleotide sequence ID" value="NC_006905.1"/>
</dbReference>
<dbReference type="SMR" id="Q57K45"/>
<dbReference type="KEGG" id="sec:SCH_3011"/>
<dbReference type="HOGENOM" id="CLU_025427_0_2_6"/>
<dbReference type="UniPathway" id="UPA00109">
    <property type="reaction ID" value="UER00185"/>
</dbReference>
<dbReference type="Proteomes" id="UP000000538">
    <property type="component" value="Chromosome"/>
</dbReference>
<dbReference type="GO" id="GO:0005829">
    <property type="term" value="C:cytosol"/>
    <property type="evidence" value="ECO:0007669"/>
    <property type="project" value="TreeGrafter"/>
</dbReference>
<dbReference type="GO" id="GO:0043531">
    <property type="term" value="F:ADP binding"/>
    <property type="evidence" value="ECO:0007669"/>
    <property type="project" value="TreeGrafter"/>
</dbReference>
<dbReference type="GO" id="GO:0005524">
    <property type="term" value="F:ATP binding"/>
    <property type="evidence" value="ECO:0007669"/>
    <property type="project" value="UniProtKB-KW"/>
</dbReference>
<dbReference type="GO" id="GO:0004618">
    <property type="term" value="F:phosphoglycerate kinase activity"/>
    <property type="evidence" value="ECO:0007669"/>
    <property type="project" value="UniProtKB-UniRule"/>
</dbReference>
<dbReference type="GO" id="GO:0006094">
    <property type="term" value="P:gluconeogenesis"/>
    <property type="evidence" value="ECO:0007669"/>
    <property type="project" value="TreeGrafter"/>
</dbReference>
<dbReference type="GO" id="GO:0006096">
    <property type="term" value="P:glycolytic process"/>
    <property type="evidence" value="ECO:0007669"/>
    <property type="project" value="UniProtKB-UniRule"/>
</dbReference>
<dbReference type="FunFam" id="3.40.50.1260:FF:000001">
    <property type="entry name" value="Phosphoglycerate kinase"/>
    <property type="match status" value="1"/>
</dbReference>
<dbReference type="FunFam" id="3.40.50.1260:FF:000002">
    <property type="entry name" value="Phosphoglycerate kinase"/>
    <property type="match status" value="1"/>
</dbReference>
<dbReference type="Gene3D" id="3.40.50.1260">
    <property type="entry name" value="Phosphoglycerate kinase, N-terminal domain"/>
    <property type="match status" value="2"/>
</dbReference>
<dbReference type="HAMAP" id="MF_00145">
    <property type="entry name" value="Phosphoglyc_kinase"/>
    <property type="match status" value="1"/>
</dbReference>
<dbReference type="InterPro" id="IPR001576">
    <property type="entry name" value="Phosphoglycerate_kinase"/>
</dbReference>
<dbReference type="InterPro" id="IPR015911">
    <property type="entry name" value="Phosphoglycerate_kinase_CS"/>
</dbReference>
<dbReference type="InterPro" id="IPR015824">
    <property type="entry name" value="Phosphoglycerate_kinase_N"/>
</dbReference>
<dbReference type="InterPro" id="IPR036043">
    <property type="entry name" value="Phosphoglycerate_kinase_sf"/>
</dbReference>
<dbReference type="PANTHER" id="PTHR11406">
    <property type="entry name" value="PHOSPHOGLYCERATE KINASE"/>
    <property type="match status" value="1"/>
</dbReference>
<dbReference type="PANTHER" id="PTHR11406:SF23">
    <property type="entry name" value="PHOSPHOGLYCERATE KINASE 1, CHLOROPLASTIC-RELATED"/>
    <property type="match status" value="1"/>
</dbReference>
<dbReference type="Pfam" id="PF00162">
    <property type="entry name" value="PGK"/>
    <property type="match status" value="1"/>
</dbReference>
<dbReference type="PIRSF" id="PIRSF000724">
    <property type="entry name" value="Pgk"/>
    <property type="match status" value="1"/>
</dbReference>
<dbReference type="PRINTS" id="PR00477">
    <property type="entry name" value="PHGLYCKINASE"/>
</dbReference>
<dbReference type="SUPFAM" id="SSF53748">
    <property type="entry name" value="Phosphoglycerate kinase"/>
    <property type="match status" value="1"/>
</dbReference>
<dbReference type="PROSITE" id="PS00111">
    <property type="entry name" value="PGLYCERATE_KINASE"/>
    <property type="match status" value="1"/>
</dbReference>
<protein>
    <recommendedName>
        <fullName evidence="1">Phosphoglycerate kinase</fullName>
        <ecNumber evidence="1">2.7.2.3</ecNumber>
    </recommendedName>
</protein>
<reference key="1">
    <citation type="journal article" date="2005" name="Nucleic Acids Res.">
        <title>The genome sequence of Salmonella enterica serovar Choleraesuis, a highly invasive and resistant zoonotic pathogen.</title>
        <authorList>
            <person name="Chiu C.-H."/>
            <person name="Tang P."/>
            <person name="Chu C."/>
            <person name="Hu S."/>
            <person name="Bao Q."/>
            <person name="Yu J."/>
            <person name="Chou Y.-Y."/>
            <person name="Wang H.-S."/>
            <person name="Lee Y.-S."/>
        </authorList>
    </citation>
    <scope>NUCLEOTIDE SEQUENCE [LARGE SCALE GENOMIC DNA]</scope>
    <source>
        <strain>SC-B67</strain>
    </source>
</reference>
<accession>Q57K45</accession>
<organism>
    <name type="scientific">Salmonella choleraesuis (strain SC-B67)</name>
    <dbReference type="NCBI Taxonomy" id="321314"/>
    <lineage>
        <taxon>Bacteria</taxon>
        <taxon>Pseudomonadati</taxon>
        <taxon>Pseudomonadota</taxon>
        <taxon>Gammaproteobacteria</taxon>
        <taxon>Enterobacterales</taxon>
        <taxon>Enterobacteriaceae</taxon>
        <taxon>Salmonella</taxon>
    </lineage>
</organism>
<sequence length="387" mass="41132">MSVIKMTDLDLAGKRVFIRADLNVPVKEGKVTSDARIRASLPTIELALKQGAKVMVTSHLGRPTEGEYNEEFSLLPVVNYLKDKLSNPVRLVKDYLDGVDVAEGELVVLENVRFNKGEKKDDEALSKKYAALCDVFVMDAFGTAHRAQASTHGIGKFADVACAGPLLAAELDALGKALKEPARPMVAIVGGSKVSTKLTVLDSLSKIADQLIVGGGIANTFVAAQGHSVGKSLYEADLVDEAKRLLTTCDIPVPTDVRVATEFSETAPATLKSVNDVKEDEQILDIGDASAQQLAEILKNAKTILWNGPVGVFEFPNFRKGTEIVANAIADSEAFSIAGGGDTLAAIDLFGIADKISYISTGGGAFLEFVEGKVLPAVAMLEERAKK</sequence>
<name>PGK_SALCH</name>
<feature type="chain" id="PRO_1000058051" description="Phosphoglycerate kinase">
    <location>
        <begin position="1"/>
        <end position="387"/>
    </location>
</feature>
<feature type="binding site" evidence="1">
    <location>
        <begin position="21"/>
        <end position="23"/>
    </location>
    <ligand>
        <name>substrate</name>
    </ligand>
</feature>
<feature type="binding site" evidence="1">
    <location>
        <position position="36"/>
    </location>
    <ligand>
        <name>substrate</name>
    </ligand>
</feature>
<feature type="binding site" evidence="1">
    <location>
        <begin position="59"/>
        <end position="62"/>
    </location>
    <ligand>
        <name>substrate</name>
    </ligand>
</feature>
<feature type="binding site" evidence="1">
    <location>
        <position position="113"/>
    </location>
    <ligand>
        <name>substrate</name>
    </ligand>
</feature>
<feature type="binding site" evidence="1">
    <location>
        <position position="146"/>
    </location>
    <ligand>
        <name>substrate</name>
    </ligand>
</feature>
<feature type="binding site" evidence="1">
    <location>
        <position position="197"/>
    </location>
    <ligand>
        <name>ATP</name>
        <dbReference type="ChEBI" id="CHEBI:30616"/>
    </ligand>
</feature>
<feature type="binding site" evidence="1">
    <location>
        <position position="314"/>
    </location>
    <ligand>
        <name>ATP</name>
        <dbReference type="ChEBI" id="CHEBI:30616"/>
    </ligand>
</feature>
<feature type="binding site" evidence="1">
    <location>
        <begin position="340"/>
        <end position="343"/>
    </location>
    <ligand>
        <name>ATP</name>
        <dbReference type="ChEBI" id="CHEBI:30616"/>
    </ligand>
</feature>
<gene>
    <name evidence="1" type="primary">pgk</name>
    <name type="ordered locus">SCH_3011</name>
</gene>
<keyword id="KW-0067">ATP-binding</keyword>
<keyword id="KW-0963">Cytoplasm</keyword>
<keyword id="KW-0324">Glycolysis</keyword>
<keyword id="KW-0418">Kinase</keyword>
<keyword id="KW-0547">Nucleotide-binding</keyword>
<keyword id="KW-0808">Transferase</keyword>